<evidence type="ECO:0000255" key="1">
    <source>
        <dbReference type="HAMAP-Rule" id="MF_00376"/>
    </source>
</evidence>
<proteinExistence type="inferred from homology"/>
<comment type="function">
    <text evidence="1">Catalyzes the phosphorylation of the 3'-hydroxyl group of dephosphocoenzyme A to form coenzyme A.</text>
</comment>
<comment type="catalytic activity">
    <reaction evidence="1">
        <text>3'-dephospho-CoA + ATP = ADP + CoA + H(+)</text>
        <dbReference type="Rhea" id="RHEA:18245"/>
        <dbReference type="ChEBI" id="CHEBI:15378"/>
        <dbReference type="ChEBI" id="CHEBI:30616"/>
        <dbReference type="ChEBI" id="CHEBI:57287"/>
        <dbReference type="ChEBI" id="CHEBI:57328"/>
        <dbReference type="ChEBI" id="CHEBI:456216"/>
        <dbReference type="EC" id="2.7.1.24"/>
    </reaction>
</comment>
<comment type="pathway">
    <text evidence="1">Cofactor biosynthesis; coenzyme A biosynthesis; CoA from (R)-pantothenate: step 5/5.</text>
</comment>
<comment type="subcellular location">
    <subcellularLocation>
        <location evidence="1">Cytoplasm</location>
    </subcellularLocation>
</comment>
<comment type="similarity">
    <text evidence="1">Belongs to the CoaE family.</text>
</comment>
<feature type="chain" id="PRO_0000172946" description="Dephospho-CoA kinase">
    <location>
        <begin position="1"/>
        <end position="205"/>
    </location>
</feature>
<feature type="domain" description="DPCK" evidence="1">
    <location>
        <begin position="4"/>
        <end position="204"/>
    </location>
</feature>
<feature type="binding site" evidence="1">
    <location>
        <begin position="12"/>
        <end position="17"/>
    </location>
    <ligand>
        <name>ATP</name>
        <dbReference type="ChEBI" id="CHEBI:30616"/>
    </ligand>
</feature>
<organism>
    <name type="scientific">Haemophilus ducreyi (strain 35000HP / ATCC 700724)</name>
    <dbReference type="NCBI Taxonomy" id="233412"/>
    <lineage>
        <taxon>Bacteria</taxon>
        <taxon>Pseudomonadati</taxon>
        <taxon>Pseudomonadota</taxon>
        <taxon>Gammaproteobacteria</taxon>
        <taxon>Pasteurellales</taxon>
        <taxon>Pasteurellaceae</taxon>
        <taxon>Haemophilus</taxon>
    </lineage>
</organism>
<gene>
    <name evidence="1" type="primary">coaE</name>
    <name type="ordered locus">HD_1127</name>
</gene>
<sequence length="205" mass="23191">MAFVVGLTGGIASGKTTIANMFAELGATIIDADIVARQVVTKGSPLFLKIVQHFGQQVLTTQGELNRAQLRQLIFANQVEKNWLNNLLHPAIRREMLIQLRQARGPYVLFVVPLLIENKLIEFCQRVLVIDVYPEVQLARALTRDRSNIATIRGIMASQVNRLTRLSYANDIIENNLPLAESLERLQMQVQQLHQYYLTLATQQE</sequence>
<reference key="1">
    <citation type="submission" date="2003-06" db="EMBL/GenBank/DDBJ databases">
        <title>The complete genome sequence of Haemophilus ducreyi.</title>
        <authorList>
            <person name="Munson R.S. Jr."/>
            <person name="Ray W.C."/>
            <person name="Mahairas G."/>
            <person name="Sabo P."/>
            <person name="Mungur R."/>
            <person name="Johnson L."/>
            <person name="Nguyen D."/>
            <person name="Wang J."/>
            <person name="Forst C."/>
            <person name="Hood L."/>
        </authorList>
    </citation>
    <scope>NUCLEOTIDE SEQUENCE [LARGE SCALE GENOMIC DNA]</scope>
    <source>
        <strain>35000HP / ATCC 700724</strain>
    </source>
</reference>
<dbReference type="EC" id="2.7.1.24" evidence="1"/>
<dbReference type="EMBL" id="AE017143">
    <property type="protein sequence ID" value="AAP95990.1"/>
    <property type="molecule type" value="Genomic_DNA"/>
</dbReference>
<dbReference type="RefSeq" id="WP_010945039.1">
    <property type="nucleotide sequence ID" value="NC_002940.2"/>
</dbReference>
<dbReference type="SMR" id="Q7VM70"/>
<dbReference type="STRING" id="233412.HD_1127"/>
<dbReference type="KEGG" id="hdu:HD_1127"/>
<dbReference type="eggNOG" id="COG0237">
    <property type="taxonomic scope" value="Bacteria"/>
</dbReference>
<dbReference type="HOGENOM" id="CLU_057180_1_2_6"/>
<dbReference type="OrthoDB" id="9812943at2"/>
<dbReference type="UniPathway" id="UPA00241">
    <property type="reaction ID" value="UER00356"/>
</dbReference>
<dbReference type="Proteomes" id="UP000001022">
    <property type="component" value="Chromosome"/>
</dbReference>
<dbReference type="GO" id="GO:0005737">
    <property type="term" value="C:cytoplasm"/>
    <property type="evidence" value="ECO:0007669"/>
    <property type="project" value="UniProtKB-SubCell"/>
</dbReference>
<dbReference type="GO" id="GO:0005524">
    <property type="term" value="F:ATP binding"/>
    <property type="evidence" value="ECO:0007669"/>
    <property type="project" value="UniProtKB-UniRule"/>
</dbReference>
<dbReference type="GO" id="GO:0004140">
    <property type="term" value="F:dephospho-CoA kinase activity"/>
    <property type="evidence" value="ECO:0007669"/>
    <property type="project" value="UniProtKB-UniRule"/>
</dbReference>
<dbReference type="GO" id="GO:0015937">
    <property type="term" value="P:coenzyme A biosynthetic process"/>
    <property type="evidence" value="ECO:0007669"/>
    <property type="project" value="UniProtKB-UniRule"/>
</dbReference>
<dbReference type="CDD" id="cd02022">
    <property type="entry name" value="DPCK"/>
    <property type="match status" value="1"/>
</dbReference>
<dbReference type="Gene3D" id="3.40.50.300">
    <property type="entry name" value="P-loop containing nucleotide triphosphate hydrolases"/>
    <property type="match status" value="1"/>
</dbReference>
<dbReference type="HAMAP" id="MF_00376">
    <property type="entry name" value="Dephospho_CoA_kinase"/>
    <property type="match status" value="1"/>
</dbReference>
<dbReference type="InterPro" id="IPR001977">
    <property type="entry name" value="Depp_CoAkinase"/>
</dbReference>
<dbReference type="InterPro" id="IPR027417">
    <property type="entry name" value="P-loop_NTPase"/>
</dbReference>
<dbReference type="NCBIfam" id="TIGR00152">
    <property type="entry name" value="dephospho-CoA kinase"/>
    <property type="match status" value="1"/>
</dbReference>
<dbReference type="PANTHER" id="PTHR10695:SF46">
    <property type="entry name" value="BIFUNCTIONAL COENZYME A SYNTHASE-RELATED"/>
    <property type="match status" value="1"/>
</dbReference>
<dbReference type="PANTHER" id="PTHR10695">
    <property type="entry name" value="DEPHOSPHO-COA KINASE-RELATED"/>
    <property type="match status" value="1"/>
</dbReference>
<dbReference type="Pfam" id="PF01121">
    <property type="entry name" value="CoaE"/>
    <property type="match status" value="1"/>
</dbReference>
<dbReference type="PRINTS" id="PR00988">
    <property type="entry name" value="URIDINKINASE"/>
</dbReference>
<dbReference type="SUPFAM" id="SSF52540">
    <property type="entry name" value="P-loop containing nucleoside triphosphate hydrolases"/>
    <property type="match status" value="1"/>
</dbReference>
<dbReference type="PROSITE" id="PS51219">
    <property type="entry name" value="DPCK"/>
    <property type="match status" value="1"/>
</dbReference>
<protein>
    <recommendedName>
        <fullName evidence="1">Dephospho-CoA kinase</fullName>
        <ecNumber evidence="1">2.7.1.24</ecNumber>
    </recommendedName>
    <alternativeName>
        <fullName evidence="1">Dephosphocoenzyme A kinase</fullName>
    </alternativeName>
</protein>
<name>COAE_HAEDU</name>
<keyword id="KW-0067">ATP-binding</keyword>
<keyword id="KW-0173">Coenzyme A biosynthesis</keyword>
<keyword id="KW-0963">Cytoplasm</keyword>
<keyword id="KW-0418">Kinase</keyword>
<keyword id="KW-0547">Nucleotide-binding</keyword>
<keyword id="KW-1185">Reference proteome</keyword>
<keyword id="KW-0808">Transferase</keyword>
<accession>Q7VM70</accession>